<accession>D4ANU4</accession>
<dbReference type="EC" id="3.2.1.17" evidence="1"/>
<dbReference type="EMBL" id="ABSU01000004">
    <property type="protein sequence ID" value="EFE34955.1"/>
    <property type="molecule type" value="Genomic_DNA"/>
</dbReference>
<dbReference type="RefSeq" id="XP_003015600.1">
    <property type="nucleotide sequence ID" value="XM_003015554.1"/>
</dbReference>
<dbReference type="SMR" id="D4ANU4"/>
<dbReference type="STRING" id="663331.D4ANU4"/>
<dbReference type="GeneID" id="9525881"/>
<dbReference type="KEGG" id="abe:ARB_05911"/>
<dbReference type="eggNOG" id="ENOG502S19Y">
    <property type="taxonomic scope" value="Eukaryota"/>
</dbReference>
<dbReference type="HOGENOM" id="CLU_044973_4_0_1"/>
<dbReference type="OMA" id="TSWWTQC"/>
<dbReference type="OrthoDB" id="6590422at2759"/>
<dbReference type="Proteomes" id="UP000008866">
    <property type="component" value="Unassembled WGS sequence"/>
</dbReference>
<dbReference type="GO" id="GO:0005576">
    <property type="term" value="C:extracellular region"/>
    <property type="evidence" value="ECO:0007669"/>
    <property type="project" value="UniProtKB-SubCell"/>
</dbReference>
<dbReference type="GO" id="GO:0003796">
    <property type="term" value="F:lysozyme activity"/>
    <property type="evidence" value="ECO:0007669"/>
    <property type="project" value="UniProtKB-EC"/>
</dbReference>
<dbReference type="GO" id="GO:0016052">
    <property type="term" value="P:carbohydrate catabolic process"/>
    <property type="evidence" value="ECO:0007669"/>
    <property type="project" value="TreeGrafter"/>
</dbReference>
<dbReference type="GO" id="GO:0016998">
    <property type="term" value="P:cell wall macromolecule catabolic process"/>
    <property type="evidence" value="ECO:0007669"/>
    <property type="project" value="InterPro"/>
</dbReference>
<dbReference type="GO" id="GO:0042742">
    <property type="term" value="P:defense response to bacterium"/>
    <property type="evidence" value="ECO:0007669"/>
    <property type="project" value="UniProtKB-KW"/>
</dbReference>
<dbReference type="GO" id="GO:0031640">
    <property type="term" value="P:killing of cells of another organism"/>
    <property type="evidence" value="ECO:0007669"/>
    <property type="project" value="UniProtKB-KW"/>
</dbReference>
<dbReference type="GO" id="GO:0009253">
    <property type="term" value="P:peptidoglycan catabolic process"/>
    <property type="evidence" value="ECO:0007669"/>
    <property type="project" value="InterPro"/>
</dbReference>
<dbReference type="CDD" id="cd06412">
    <property type="entry name" value="GH25_CH-type"/>
    <property type="match status" value="1"/>
</dbReference>
<dbReference type="FunFam" id="3.20.20.80:FF:000060">
    <property type="entry name" value="Lysozyme M1"/>
    <property type="match status" value="1"/>
</dbReference>
<dbReference type="Gene3D" id="3.20.20.80">
    <property type="entry name" value="Glycosidases"/>
    <property type="match status" value="1"/>
</dbReference>
<dbReference type="InterPro" id="IPR002053">
    <property type="entry name" value="Glyco_hydro_25"/>
</dbReference>
<dbReference type="InterPro" id="IPR018077">
    <property type="entry name" value="Glyco_hydro_fam25_subgr"/>
</dbReference>
<dbReference type="InterPro" id="IPR017853">
    <property type="entry name" value="Glycoside_hydrolase_SF"/>
</dbReference>
<dbReference type="PANTHER" id="PTHR34135">
    <property type="entry name" value="LYSOZYME"/>
    <property type="match status" value="1"/>
</dbReference>
<dbReference type="PANTHER" id="PTHR34135:SF2">
    <property type="entry name" value="LYSOZYME"/>
    <property type="match status" value="1"/>
</dbReference>
<dbReference type="Pfam" id="PF01183">
    <property type="entry name" value="Glyco_hydro_25"/>
    <property type="match status" value="1"/>
</dbReference>
<dbReference type="SMART" id="SM00641">
    <property type="entry name" value="Glyco_25"/>
    <property type="match status" value="1"/>
</dbReference>
<dbReference type="SUPFAM" id="SSF51445">
    <property type="entry name" value="(Trans)glycosidases"/>
    <property type="match status" value="1"/>
</dbReference>
<dbReference type="PROSITE" id="PS51904">
    <property type="entry name" value="GLYCOSYL_HYDROL_F25_2"/>
    <property type="match status" value="1"/>
</dbReference>
<feature type="signal peptide" evidence="2">
    <location>
        <begin position="1"/>
        <end position="17"/>
    </location>
</feature>
<feature type="chain" id="PRO_0000434503" description="N,O-diacetylmuramidase" evidence="2">
    <location>
        <begin position="18"/>
        <end position="235"/>
    </location>
</feature>
<feature type="domain" description="Ch-type lysozyme" evidence="3">
    <location>
        <begin position="29"/>
        <end position="235"/>
    </location>
</feature>
<feature type="active site" evidence="3">
    <location>
        <position position="34"/>
    </location>
</feature>
<feature type="active site" evidence="3">
    <location>
        <position position="122"/>
    </location>
</feature>
<feature type="active site" evidence="3">
    <location>
        <position position="124"/>
    </location>
</feature>
<feature type="disulfide bond" evidence="1">
    <location>
        <begin position="132"/>
        <end position="171"/>
    </location>
</feature>
<name>LYS_ARTBC</name>
<sequence length="235" mass="25164">MKLSLLTVAAAAGAAVAAPAAEIDTRAGSVQGFDISGYQPNVDFRAAYNGGARFVMIKATEGTTFKSSTFNSQYTGATNNKFIRGGYHFAHPDTSATAQCDYFLANGGGWSNDGITLPGMIDLEGTSGKPKCYGLSASAMIAWIKAFSDRYNAKTGRYPMIYTSPDWWQSCTGNTKTFGTTIPLVLARWASSPGTPPGGWPYHTFWQNADTYRFGGDSEIFNGGMDQLQRFAKGG</sequence>
<organism>
    <name type="scientific">Arthroderma benhamiae (strain ATCC MYA-4681 / CBS 112371)</name>
    <name type="common">Trichophyton mentagrophytes</name>
    <dbReference type="NCBI Taxonomy" id="663331"/>
    <lineage>
        <taxon>Eukaryota</taxon>
        <taxon>Fungi</taxon>
        <taxon>Dikarya</taxon>
        <taxon>Ascomycota</taxon>
        <taxon>Pezizomycotina</taxon>
        <taxon>Eurotiomycetes</taxon>
        <taxon>Eurotiomycetidae</taxon>
        <taxon>Onygenales</taxon>
        <taxon>Arthrodermataceae</taxon>
        <taxon>Trichophyton</taxon>
    </lineage>
</organism>
<reference key="1">
    <citation type="journal article" date="2011" name="Genome Biol.">
        <title>Comparative and functional genomics provide insights into the pathogenicity of dermatophytic fungi.</title>
        <authorList>
            <person name="Burmester A."/>
            <person name="Shelest E."/>
            <person name="Gloeckner G."/>
            <person name="Heddergott C."/>
            <person name="Schindler S."/>
            <person name="Staib P."/>
            <person name="Heidel A."/>
            <person name="Felder M."/>
            <person name="Petzold A."/>
            <person name="Szafranski K."/>
            <person name="Feuermann M."/>
            <person name="Pedruzzi I."/>
            <person name="Priebe S."/>
            <person name="Groth M."/>
            <person name="Winkler R."/>
            <person name="Li W."/>
            <person name="Kniemeyer O."/>
            <person name="Schroeckh V."/>
            <person name="Hertweck C."/>
            <person name="Hube B."/>
            <person name="White T.C."/>
            <person name="Platzer M."/>
            <person name="Guthke R."/>
            <person name="Heitman J."/>
            <person name="Woestemeyer J."/>
            <person name="Zipfel P.F."/>
            <person name="Monod M."/>
            <person name="Brakhage A.A."/>
        </authorList>
    </citation>
    <scope>NUCLEOTIDE SEQUENCE [LARGE SCALE GENOMIC DNA]</scope>
    <scope>IDENTIFICATION BY MASS SPECTROMETRY</scope>
    <scope>SUBCELLULAR LOCATION</scope>
    <source>
        <strain>ATCC MYA-4681 / CBS 112371</strain>
    </source>
</reference>
<reference key="2">
    <citation type="journal article" date="2011" name="Proteomics">
        <title>Identification of novel secreted proteases during extracellular proteolysis by dermatophytes at acidic pH.</title>
        <authorList>
            <person name="Sriranganadane D."/>
            <person name="Waridel P."/>
            <person name="Salamin K."/>
            <person name="Feuermann M."/>
            <person name="Mignon B."/>
            <person name="Staib P."/>
            <person name="Neuhaus J.M."/>
            <person name="Quadroni M."/>
            <person name="Monod M."/>
        </authorList>
    </citation>
    <scope>IDENTIFICATION BY MASS SPECTROMETRY</scope>
    <scope>SUBCELLULAR LOCATION</scope>
</reference>
<comment type="function">
    <text evidence="1">This enzyme has both lysozyme (acetylmuramidase) and diacetylmuramidase activities.</text>
</comment>
<comment type="catalytic activity">
    <reaction evidence="1">
        <text>Hydrolysis of (1-&gt;4)-beta-linkages between N-acetylmuramic acid and N-acetyl-D-glucosamine residues in a peptidoglycan and between N-acetyl-D-glucosamine residues in chitodextrins.</text>
        <dbReference type="EC" id="3.2.1.17"/>
    </reaction>
</comment>
<comment type="subcellular location">
    <subcellularLocation>
        <location evidence="4 5">Secreted</location>
    </subcellularLocation>
</comment>
<comment type="similarity">
    <text evidence="3 6">Belongs to the glycosyl hydrolase 25 family.</text>
</comment>
<proteinExistence type="evidence at protein level"/>
<keyword id="KW-0929">Antimicrobial</keyword>
<keyword id="KW-0081">Bacteriolytic enzyme</keyword>
<keyword id="KW-1015">Disulfide bond</keyword>
<keyword id="KW-0326">Glycosidase</keyword>
<keyword id="KW-0378">Hydrolase</keyword>
<keyword id="KW-1185">Reference proteome</keyword>
<keyword id="KW-0964">Secreted</keyword>
<keyword id="KW-0732">Signal</keyword>
<protein>
    <recommendedName>
        <fullName evidence="1">N,O-diacetylmuramidase</fullName>
        <ecNumber evidence="1">3.2.1.17</ecNumber>
    </recommendedName>
    <alternativeName>
        <fullName evidence="1">Lysozyme CH</fullName>
    </alternativeName>
</protein>
<gene>
    <name type="ORF">ARB_05911</name>
</gene>
<evidence type="ECO:0000250" key="1">
    <source>
        <dbReference type="UniProtKB" id="P00721"/>
    </source>
</evidence>
<evidence type="ECO:0000255" key="2"/>
<evidence type="ECO:0000255" key="3">
    <source>
        <dbReference type="PROSITE-ProRule" id="PRU01252"/>
    </source>
</evidence>
<evidence type="ECO:0000269" key="4">
    <source>
    </source>
</evidence>
<evidence type="ECO:0000269" key="5">
    <source>
    </source>
</evidence>
<evidence type="ECO:0000305" key="6"/>